<keyword id="KW-0028">Amino-acid biosynthesis</keyword>
<keyword id="KW-0378">Hydrolase</keyword>
<keyword id="KW-0486">Methionine biosynthesis</keyword>
<keyword id="KW-1185">Reference proteome</keyword>
<reference key="1">
    <citation type="journal article" date="1997" name="Nature">
        <title>The complete genome sequence of the Gram-positive bacterium Bacillus subtilis.</title>
        <authorList>
            <person name="Kunst F."/>
            <person name="Ogasawara N."/>
            <person name="Moszer I."/>
            <person name="Albertini A.M."/>
            <person name="Alloni G."/>
            <person name="Azevedo V."/>
            <person name="Bertero M.G."/>
            <person name="Bessieres P."/>
            <person name="Bolotin A."/>
            <person name="Borchert S."/>
            <person name="Borriss R."/>
            <person name="Boursier L."/>
            <person name="Brans A."/>
            <person name="Braun M."/>
            <person name="Brignell S.C."/>
            <person name="Bron S."/>
            <person name="Brouillet S."/>
            <person name="Bruschi C.V."/>
            <person name="Caldwell B."/>
            <person name="Capuano V."/>
            <person name="Carter N.M."/>
            <person name="Choi S.-K."/>
            <person name="Codani J.-J."/>
            <person name="Connerton I.F."/>
            <person name="Cummings N.J."/>
            <person name="Daniel R.A."/>
            <person name="Denizot F."/>
            <person name="Devine K.M."/>
            <person name="Duesterhoeft A."/>
            <person name="Ehrlich S.D."/>
            <person name="Emmerson P.T."/>
            <person name="Entian K.-D."/>
            <person name="Errington J."/>
            <person name="Fabret C."/>
            <person name="Ferrari E."/>
            <person name="Foulger D."/>
            <person name="Fritz C."/>
            <person name="Fujita M."/>
            <person name="Fujita Y."/>
            <person name="Fuma S."/>
            <person name="Galizzi A."/>
            <person name="Galleron N."/>
            <person name="Ghim S.-Y."/>
            <person name="Glaser P."/>
            <person name="Goffeau A."/>
            <person name="Golightly E.J."/>
            <person name="Grandi G."/>
            <person name="Guiseppi G."/>
            <person name="Guy B.J."/>
            <person name="Haga K."/>
            <person name="Haiech J."/>
            <person name="Harwood C.R."/>
            <person name="Henaut A."/>
            <person name="Hilbert H."/>
            <person name="Holsappel S."/>
            <person name="Hosono S."/>
            <person name="Hullo M.-F."/>
            <person name="Itaya M."/>
            <person name="Jones L.-M."/>
            <person name="Joris B."/>
            <person name="Karamata D."/>
            <person name="Kasahara Y."/>
            <person name="Klaerr-Blanchard M."/>
            <person name="Klein C."/>
            <person name="Kobayashi Y."/>
            <person name="Koetter P."/>
            <person name="Koningstein G."/>
            <person name="Krogh S."/>
            <person name="Kumano M."/>
            <person name="Kurita K."/>
            <person name="Lapidus A."/>
            <person name="Lardinois S."/>
            <person name="Lauber J."/>
            <person name="Lazarevic V."/>
            <person name="Lee S.-M."/>
            <person name="Levine A."/>
            <person name="Liu H."/>
            <person name="Masuda S."/>
            <person name="Mauel C."/>
            <person name="Medigue C."/>
            <person name="Medina N."/>
            <person name="Mellado R.P."/>
            <person name="Mizuno M."/>
            <person name="Moestl D."/>
            <person name="Nakai S."/>
            <person name="Noback M."/>
            <person name="Noone D."/>
            <person name="O'Reilly M."/>
            <person name="Ogawa K."/>
            <person name="Ogiwara A."/>
            <person name="Oudega B."/>
            <person name="Park S.-H."/>
            <person name="Parro V."/>
            <person name="Pohl T.M."/>
            <person name="Portetelle D."/>
            <person name="Porwollik S."/>
            <person name="Prescott A.M."/>
            <person name="Presecan E."/>
            <person name="Pujic P."/>
            <person name="Purnelle B."/>
            <person name="Rapoport G."/>
            <person name="Rey M."/>
            <person name="Reynolds S."/>
            <person name="Rieger M."/>
            <person name="Rivolta C."/>
            <person name="Rocha E."/>
            <person name="Roche B."/>
            <person name="Rose M."/>
            <person name="Sadaie Y."/>
            <person name="Sato T."/>
            <person name="Scanlan E."/>
            <person name="Schleich S."/>
            <person name="Schroeter R."/>
            <person name="Scoffone F."/>
            <person name="Sekiguchi J."/>
            <person name="Sekowska A."/>
            <person name="Seror S.J."/>
            <person name="Serror P."/>
            <person name="Shin B.-S."/>
            <person name="Soldo B."/>
            <person name="Sorokin A."/>
            <person name="Tacconi E."/>
            <person name="Takagi T."/>
            <person name="Takahashi H."/>
            <person name="Takemaru K."/>
            <person name="Takeuchi M."/>
            <person name="Tamakoshi A."/>
            <person name="Tanaka T."/>
            <person name="Terpstra P."/>
            <person name="Tognoni A."/>
            <person name="Tosato V."/>
            <person name="Uchiyama S."/>
            <person name="Vandenbol M."/>
            <person name="Vannier F."/>
            <person name="Vassarotti A."/>
            <person name="Viari A."/>
            <person name="Wambutt R."/>
            <person name="Wedler E."/>
            <person name="Wedler H."/>
            <person name="Weitzenegger T."/>
            <person name="Winters P."/>
            <person name="Wipat A."/>
            <person name="Yamamoto H."/>
            <person name="Yamane K."/>
            <person name="Yasumoto K."/>
            <person name="Yata K."/>
            <person name="Yoshida K."/>
            <person name="Yoshikawa H.-F."/>
            <person name="Zumstein E."/>
            <person name="Yoshikawa H."/>
            <person name="Danchin A."/>
        </authorList>
    </citation>
    <scope>NUCLEOTIDE SEQUENCE [LARGE SCALE GENOMIC DNA]</scope>
    <source>
        <strain>168</strain>
    </source>
</reference>
<reference key="2">
    <citation type="journal article" date="1999" name="DNA Res.">
        <title>Identification of yrrU as the methylthioadenosine nucleosidase gene in Bacillus subtilis.</title>
        <authorList>
            <person name="Sekowska A."/>
            <person name="Danchin A."/>
        </authorList>
    </citation>
    <scope>FUNCTION</scope>
</reference>
<reference key="3">
    <citation type="journal article" date="2002" name="BMC Microbiol.">
        <title>The methionine salvage pathway in Bacillus subtilis.</title>
        <authorList>
            <person name="Sekowska A."/>
            <person name="Danchin A."/>
        </authorList>
    </citation>
    <scope>REVIEW</scope>
</reference>
<protein>
    <recommendedName>
        <fullName evidence="1">5'-methylthioadenosine/S-adenosylhomocysteine nucleosidase</fullName>
        <shortName evidence="1">MTA/SAH nucleosidase</shortName>
        <shortName evidence="1">MTAN</shortName>
        <ecNumber evidence="1">3.2.2.9</ecNumber>
    </recommendedName>
    <alternativeName>
        <fullName evidence="1">5'-deoxyadenosine nucleosidase</fullName>
        <shortName evidence="1">DOA nucleosidase</shortName>
        <shortName evidence="1">dAdo nucleosidase</shortName>
    </alternativeName>
    <alternativeName>
        <fullName evidence="1">5'-methylthioadenosine nucleosidase</fullName>
        <shortName evidence="1">MTA nucleosidase</shortName>
    </alternativeName>
    <alternativeName>
        <fullName evidence="1">S-adenosylhomocysteine nucleosidase</fullName>
        <shortName evidence="1">AdoHcy nucleosidase</shortName>
        <shortName evidence="1">SAH nucleosidase</shortName>
        <shortName evidence="1">SRH nucleosidase</shortName>
    </alternativeName>
</protein>
<gene>
    <name evidence="1" type="primary">mtnN</name>
    <name type="synonym">mtn</name>
    <name type="synonym">pfs</name>
    <name type="ordered locus">BSU27270</name>
</gene>
<organism>
    <name type="scientific">Bacillus subtilis (strain 168)</name>
    <dbReference type="NCBI Taxonomy" id="224308"/>
    <lineage>
        <taxon>Bacteria</taxon>
        <taxon>Bacillati</taxon>
        <taxon>Bacillota</taxon>
        <taxon>Bacilli</taxon>
        <taxon>Bacillales</taxon>
        <taxon>Bacillaceae</taxon>
        <taxon>Bacillus</taxon>
    </lineage>
</organism>
<evidence type="ECO:0000255" key="1">
    <source>
        <dbReference type="HAMAP-Rule" id="MF_01684"/>
    </source>
</evidence>
<evidence type="ECO:0000269" key="2">
    <source>
    </source>
</evidence>
<comment type="function">
    <text evidence="1 2">Catalyzes the irreversible cleavage of the glycosidic bond in both 5'-methylthioadenosine (MTA) and S-adenosylhomocysteine (SAH/AdoHcy) to adenine and the corresponding thioribose, 5'-methylthioribose and S-ribosylhomocysteine, respectively (PubMed:10574451). Also cleaves 5'-deoxyadenosine, a toxic by-product of radical S-adenosylmethionine (SAM) enzymes, into 5-deoxyribose and adenine (By similarity).</text>
</comment>
<comment type="catalytic activity">
    <reaction evidence="1">
        <text>S-adenosyl-L-homocysteine + H2O = S-(5-deoxy-D-ribos-5-yl)-L-homocysteine + adenine</text>
        <dbReference type="Rhea" id="RHEA:17805"/>
        <dbReference type="ChEBI" id="CHEBI:15377"/>
        <dbReference type="ChEBI" id="CHEBI:16708"/>
        <dbReference type="ChEBI" id="CHEBI:57856"/>
        <dbReference type="ChEBI" id="CHEBI:58195"/>
        <dbReference type="EC" id="3.2.2.9"/>
    </reaction>
</comment>
<comment type="catalytic activity">
    <reaction evidence="1">
        <text>S-methyl-5'-thioadenosine + H2O = 5-(methylsulfanyl)-D-ribose + adenine</text>
        <dbReference type="Rhea" id="RHEA:13617"/>
        <dbReference type="ChEBI" id="CHEBI:15377"/>
        <dbReference type="ChEBI" id="CHEBI:16708"/>
        <dbReference type="ChEBI" id="CHEBI:17509"/>
        <dbReference type="ChEBI" id="CHEBI:78440"/>
        <dbReference type="EC" id="3.2.2.9"/>
    </reaction>
</comment>
<comment type="catalytic activity">
    <reaction evidence="1">
        <text>5'-deoxyadenosine + H2O = 5-deoxy-D-ribose + adenine</text>
        <dbReference type="Rhea" id="RHEA:29859"/>
        <dbReference type="ChEBI" id="CHEBI:15377"/>
        <dbReference type="ChEBI" id="CHEBI:16708"/>
        <dbReference type="ChEBI" id="CHEBI:17319"/>
        <dbReference type="ChEBI" id="CHEBI:149540"/>
        <dbReference type="EC" id="3.2.2.9"/>
    </reaction>
    <physiologicalReaction direction="left-to-right" evidence="1">
        <dbReference type="Rhea" id="RHEA:29860"/>
    </physiologicalReaction>
</comment>
<comment type="pathway">
    <text evidence="1">Amino-acid biosynthesis; L-methionine biosynthesis via salvage pathway; S-methyl-5-thio-alpha-D-ribose 1-phosphate from S-methyl-5'-thioadenosine (hydrolase route): step 1/2.</text>
</comment>
<comment type="similarity">
    <text evidence="1">Belongs to the PNP/UDP phosphorylase family. MtnN subfamily.</text>
</comment>
<sequence>MRLAVIGAMEEEVTILRNKLENAKTETIAHCEFTTGEYEGTEVILLKSGIGKVNAAISTTLLLDRYKPDYVINTGSAGGFHHTLNVGDVVISTDVRHHDVDVTAFDYEYGQVPGLPAAYAADEKLISITEEAVSELDGIQVAKGTIATGDSFMNDPKRVEEVRARFSDLYAVEMEAAAVAQVCHQFKTPFVVIRALSDIAGKESHVSFDQFLEQAAVHSTELVLKVIKRIH</sequence>
<feature type="chain" id="PRO_0000164435" description="5'-methylthioadenosine/S-adenosylhomocysteine nucleosidase">
    <location>
        <begin position="1"/>
        <end position="231"/>
    </location>
</feature>
<feature type="active site" description="Proton acceptor" evidence="1">
    <location>
        <position position="12"/>
    </location>
</feature>
<feature type="active site" description="Proton donor" evidence="1">
    <location>
        <position position="198"/>
    </location>
</feature>
<feature type="binding site" evidence="1">
    <location>
        <position position="78"/>
    </location>
    <ligand>
        <name>substrate</name>
    </ligand>
</feature>
<feature type="binding site" evidence="1">
    <location>
        <position position="153"/>
    </location>
    <ligand>
        <name>substrate</name>
    </ligand>
</feature>
<feature type="binding site" evidence="1">
    <location>
        <begin position="174"/>
        <end position="175"/>
    </location>
    <ligand>
        <name>substrate</name>
    </ligand>
</feature>
<accession>O32028</accession>
<dbReference type="EC" id="3.2.2.9" evidence="1"/>
<dbReference type="EMBL" id="AL009126">
    <property type="protein sequence ID" value="CAB14669.1"/>
    <property type="molecule type" value="Genomic_DNA"/>
</dbReference>
<dbReference type="PIR" id="D69980">
    <property type="entry name" value="D69980"/>
</dbReference>
<dbReference type="RefSeq" id="NP_390605.1">
    <property type="nucleotide sequence ID" value="NC_000964.3"/>
</dbReference>
<dbReference type="RefSeq" id="WP_009967881.1">
    <property type="nucleotide sequence ID" value="NZ_OZ025638.1"/>
</dbReference>
<dbReference type="SMR" id="O32028"/>
<dbReference type="FunCoup" id="O32028">
    <property type="interactions" value="165"/>
</dbReference>
<dbReference type="STRING" id="224308.BSU27270"/>
<dbReference type="jPOST" id="O32028"/>
<dbReference type="PaxDb" id="224308-BSU27270"/>
<dbReference type="EnsemblBacteria" id="CAB14669">
    <property type="protein sequence ID" value="CAB14669"/>
    <property type="gene ID" value="BSU_27270"/>
</dbReference>
<dbReference type="GeneID" id="938153"/>
<dbReference type="KEGG" id="bsu:BSU27270"/>
<dbReference type="PATRIC" id="fig|224308.179.peg.2963"/>
<dbReference type="eggNOG" id="COG0775">
    <property type="taxonomic scope" value="Bacteria"/>
</dbReference>
<dbReference type="InParanoid" id="O32028"/>
<dbReference type="OrthoDB" id="9792278at2"/>
<dbReference type="PhylomeDB" id="O32028"/>
<dbReference type="BioCyc" id="BSUB:BSU27270-MONOMER"/>
<dbReference type="BioCyc" id="MetaCyc:MONOMER-1290"/>
<dbReference type="UniPathway" id="UPA00904">
    <property type="reaction ID" value="UER00871"/>
</dbReference>
<dbReference type="Proteomes" id="UP000001570">
    <property type="component" value="Chromosome"/>
</dbReference>
<dbReference type="GO" id="GO:0005829">
    <property type="term" value="C:cytosol"/>
    <property type="evidence" value="ECO:0000318"/>
    <property type="project" value="GO_Central"/>
</dbReference>
<dbReference type="GO" id="GO:0008782">
    <property type="term" value="F:adenosylhomocysteine nucleosidase activity"/>
    <property type="evidence" value="ECO:0000318"/>
    <property type="project" value="GO_Central"/>
</dbReference>
<dbReference type="GO" id="GO:0008930">
    <property type="term" value="F:methylthioadenosine nucleosidase activity"/>
    <property type="evidence" value="ECO:0000318"/>
    <property type="project" value="GO_Central"/>
</dbReference>
<dbReference type="GO" id="GO:0019509">
    <property type="term" value="P:L-methionine salvage from methylthioadenosine"/>
    <property type="evidence" value="ECO:0007669"/>
    <property type="project" value="UniProtKB-UniRule"/>
</dbReference>
<dbReference type="GO" id="GO:0019284">
    <property type="term" value="P:L-methionine salvage from S-adenosylmethionine"/>
    <property type="evidence" value="ECO:0000318"/>
    <property type="project" value="GO_Central"/>
</dbReference>
<dbReference type="GO" id="GO:0009164">
    <property type="term" value="P:nucleoside catabolic process"/>
    <property type="evidence" value="ECO:0007669"/>
    <property type="project" value="InterPro"/>
</dbReference>
<dbReference type="CDD" id="cd09008">
    <property type="entry name" value="MTAN"/>
    <property type="match status" value="1"/>
</dbReference>
<dbReference type="FunFam" id="3.40.50.1580:FF:000001">
    <property type="entry name" value="MTA/SAH nucleosidase family protein"/>
    <property type="match status" value="1"/>
</dbReference>
<dbReference type="Gene3D" id="3.40.50.1580">
    <property type="entry name" value="Nucleoside phosphorylase domain"/>
    <property type="match status" value="1"/>
</dbReference>
<dbReference type="HAMAP" id="MF_01684">
    <property type="entry name" value="Salvage_MtnN"/>
    <property type="match status" value="1"/>
</dbReference>
<dbReference type="InterPro" id="IPR010049">
    <property type="entry name" value="MTA_SAH_Nsdase"/>
</dbReference>
<dbReference type="InterPro" id="IPR000845">
    <property type="entry name" value="Nucleoside_phosphorylase_d"/>
</dbReference>
<dbReference type="InterPro" id="IPR035994">
    <property type="entry name" value="Nucleoside_phosphorylase_sf"/>
</dbReference>
<dbReference type="NCBIfam" id="TIGR01704">
    <property type="entry name" value="MTA_SAH-Nsdase"/>
    <property type="match status" value="1"/>
</dbReference>
<dbReference type="NCBIfam" id="NF004079">
    <property type="entry name" value="PRK05584.1"/>
    <property type="match status" value="1"/>
</dbReference>
<dbReference type="PANTHER" id="PTHR46832">
    <property type="entry name" value="5'-METHYLTHIOADENOSINE/S-ADENOSYLHOMOCYSTEINE NUCLEOSIDASE"/>
    <property type="match status" value="1"/>
</dbReference>
<dbReference type="PANTHER" id="PTHR46832:SF1">
    <property type="entry name" value="5'-METHYLTHIOADENOSINE_S-ADENOSYLHOMOCYSTEINE NUCLEOSIDASE"/>
    <property type="match status" value="1"/>
</dbReference>
<dbReference type="Pfam" id="PF01048">
    <property type="entry name" value="PNP_UDP_1"/>
    <property type="match status" value="1"/>
</dbReference>
<dbReference type="SUPFAM" id="SSF53167">
    <property type="entry name" value="Purine and uridine phosphorylases"/>
    <property type="match status" value="1"/>
</dbReference>
<name>MTNN_BACSU</name>
<proteinExistence type="inferred from homology"/>